<reference key="1">
    <citation type="journal article" date="2010" name="PLoS Genet.">
        <title>De novo assembly of a 40 Mb eukaryotic genome from short sequence reads: Sordaria macrospora, a model organism for fungal morphogenesis.</title>
        <authorList>
            <person name="Nowrousian M."/>
            <person name="Stajich J.E."/>
            <person name="Chu M."/>
            <person name="Engh I."/>
            <person name="Espagne E."/>
            <person name="Halliday K."/>
            <person name="Kamerewerd J."/>
            <person name="Kempken F."/>
            <person name="Knab B."/>
            <person name="Kuo H.-C."/>
            <person name="Osiewacz H.D."/>
            <person name="Poeggeler S."/>
            <person name="Read N.D."/>
            <person name="Seiler S."/>
            <person name="Smith K.M."/>
            <person name="Zickler D."/>
            <person name="Kueck U."/>
            <person name="Freitag M."/>
        </authorList>
    </citation>
    <scope>NUCLEOTIDE SEQUENCE [LARGE SCALE GENOMIC DNA]</scope>
    <source>
        <strain>ATCC MYA-333 / DSM 997 / K(L3346) / K-hell</strain>
    </source>
</reference>
<comment type="function">
    <text evidence="1">Binds to the 60S ribosomal subunit and prevents its association with the 40S ribosomal subunit to form the 80S initiation complex in the cytoplasm. Is also involved in ribosome biogenesis. Associates with pre-60S subunits in the nucleus and is involved in its nuclear export.</text>
</comment>
<comment type="subunit">
    <text evidence="1">Monomer. Associates with the 60S ribosomal subunit.</text>
</comment>
<comment type="subcellular location">
    <subcellularLocation>
        <location evidence="1">Cytoplasm</location>
    </subcellularLocation>
    <subcellularLocation>
        <location evidence="1">Nucleus</location>
        <location evidence="1">Nucleolus</location>
    </subcellularLocation>
    <text evidence="1">Shuttles between cytoplasm and nucleus/nucleolus.</text>
</comment>
<comment type="PTM">
    <text evidence="1">Phosphorylation at Ser-174 and Ser-175 promotes nuclear export.</text>
</comment>
<comment type="similarity">
    <text evidence="1">Belongs to the eIF-6 family.</text>
</comment>
<comment type="sequence caution" evidence="2">
    <conflict type="erroneous gene model prediction">
        <sequence resource="EMBL-CDS" id="CCC08415"/>
    </conflict>
</comment>
<comment type="sequence caution" evidence="2">
    <conflict type="frameshift">
        <sequence resource="EMBL-CDS" id="CCC08415"/>
    </conflict>
</comment>
<proteinExistence type="inferred from homology"/>
<sequence>MAVRAQFENSNEVGVFSTLTNSYALVAVGASENFYSVFEAELQDVIPICRTTIAGTRIIGRLTAGNRKGLLVPTSTSDQELQHLRNSLPDDVRIQRIEERLSALGNVIVCNDHTALIHPDLERETEEIIADVLGVEVFRQTIADNVLVGSYMSLSNQGGLVHPKTSIQDQDELSSLLQVPLVAGSVNRGSNVIGGGMVVNDWMAVTGLDTTAPELSVIESVFRLGEGAAPGQINSSLKDTMVESFY</sequence>
<name>IF6_SORMK</name>
<dbReference type="EMBL" id="CABT02000005">
    <property type="protein sequence ID" value="CCC08415.1"/>
    <property type="status" value="ALT_SEQ"/>
    <property type="molecule type" value="Genomic_DNA"/>
</dbReference>
<dbReference type="SMR" id="D1ZG64"/>
<dbReference type="FunCoup" id="D1ZG64">
    <property type="interactions" value="1042"/>
</dbReference>
<dbReference type="STRING" id="771870.D1ZG64"/>
<dbReference type="VEuPathDB" id="FungiDB:SMAC_01959"/>
<dbReference type="eggNOG" id="KOG3185">
    <property type="taxonomic scope" value="Eukaryota"/>
</dbReference>
<dbReference type="HOGENOM" id="CLU_071894_0_0_1"/>
<dbReference type="InParanoid" id="D1ZG64"/>
<dbReference type="OrthoDB" id="4155914at2759"/>
<dbReference type="Proteomes" id="UP000001881">
    <property type="component" value="Unassembled WGS sequence"/>
</dbReference>
<dbReference type="GO" id="GO:0005737">
    <property type="term" value="C:cytoplasm"/>
    <property type="evidence" value="ECO:0007669"/>
    <property type="project" value="UniProtKB-SubCell"/>
</dbReference>
<dbReference type="GO" id="GO:0005730">
    <property type="term" value="C:nucleolus"/>
    <property type="evidence" value="ECO:0007669"/>
    <property type="project" value="UniProtKB-SubCell"/>
</dbReference>
<dbReference type="GO" id="GO:0043023">
    <property type="term" value="F:ribosomal large subunit binding"/>
    <property type="evidence" value="ECO:0007669"/>
    <property type="project" value="UniProtKB-UniRule"/>
</dbReference>
<dbReference type="GO" id="GO:0003743">
    <property type="term" value="F:translation initiation factor activity"/>
    <property type="evidence" value="ECO:0007669"/>
    <property type="project" value="UniProtKB-UniRule"/>
</dbReference>
<dbReference type="GO" id="GO:0042256">
    <property type="term" value="P:cytosolic ribosome assembly"/>
    <property type="evidence" value="ECO:0007669"/>
    <property type="project" value="UniProtKB-UniRule"/>
</dbReference>
<dbReference type="GO" id="GO:0042273">
    <property type="term" value="P:ribosomal large subunit biogenesis"/>
    <property type="evidence" value="ECO:0007669"/>
    <property type="project" value="UniProtKB-UniRule"/>
</dbReference>
<dbReference type="GO" id="GO:0000054">
    <property type="term" value="P:ribosomal subunit export from nucleus"/>
    <property type="evidence" value="ECO:0007669"/>
    <property type="project" value="UniProtKB-UniRule"/>
</dbReference>
<dbReference type="CDD" id="cd00527">
    <property type="entry name" value="IF6"/>
    <property type="match status" value="1"/>
</dbReference>
<dbReference type="FunFam" id="3.75.10.10:FF:000001">
    <property type="entry name" value="Eukaryotic translation initiation factor 6"/>
    <property type="match status" value="1"/>
</dbReference>
<dbReference type="Gene3D" id="3.75.10.10">
    <property type="entry name" value="L-arginine/glycine Amidinotransferase, Chain A"/>
    <property type="match status" value="1"/>
</dbReference>
<dbReference type="HAMAP" id="MF_00032">
    <property type="entry name" value="eIF_6"/>
    <property type="match status" value="1"/>
</dbReference>
<dbReference type="InterPro" id="IPR002769">
    <property type="entry name" value="eIF6"/>
</dbReference>
<dbReference type="NCBIfam" id="TIGR00323">
    <property type="entry name" value="eIF-6"/>
    <property type="match status" value="1"/>
</dbReference>
<dbReference type="PANTHER" id="PTHR10784">
    <property type="entry name" value="TRANSLATION INITIATION FACTOR 6"/>
    <property type="match status" value="1"/>
</dbReference>
<dbReference type="Pfam" id="PF01912">
    <property type="entry name" value="eIF-6"/>
    <property type="match status" value="1"/>
</dbReference>
<dbReference type="PIRSF" id="PIRSF006413">
    <property type="entry name" value="IF-6"/>
    <property type="match status" value="1"/>
</dbReference>
<dbReference type="SMART" id="SM00654">
    <property type="entry name" value="eIF6"/>
    <property type="match status" value="1"/>
</dbReference>
<dbReference type="SUPFAM" id="SSF55909">
    <property type="entry name" value="Pentein"/>
    <property type="match status" value="1"/>
</dbReference>
<keyword id="KW-0963">Cytoplasm</keyword>
<keyword id="KW-0396">Initiation factor</keyword>
<keyword id="KW-0539">Nucleus</keyword>
<keyword id="KW-0597">Phosphoprotein</keyword>
<keyword id="KW-0648">Protein biosynthesis</keyword>
<keyword id="KW-1185">Reference proteome</keyword>
<keyword id="KW-0690">Ribosome biogenesis</keyword>
<gene>
    <name evidence="1" type="primary">TIF6</name>
    <name type="ORF">SMAC_01959</name>
</gene>
<organism>
    <name type="scientific">Sordaria macrospora (strain ATCC MYA-333 / DSM 997 / K(L3346) / K-hell)</name>
    <dbReference type="NCBI Taxonomy" id="771870"/>
    <lineage>
        <taxon>Eukaryota</taxon>
        <taxon>Fungi</taxon>
        <taxon>Dikarya</taxon>
        <taxon>Ascomycota</taxon>
        <taxon>Pezizomycotina</taxon>
        <taxon>Sordariomycetes</taxon>
        <taxon>Sordariomycetidae</taxon>
        <taxon>Sordariales</taxon>
        <taxon>Sordariaceae</taxon>
        <taxon>Sordaria</taxon>
    </lineage>
</organism>
<protein>
    <recommendedName>
        <fullName evidence="1">Eukaryotic translation initiation factor 6</fullName>
        <shortName evidence="1">eIF-6</shortName>
    </recommendedName>
</protein>
<evidence type="ECO:0000255" key="1">
    <source>
        <dbReference type="HAMAP-Rule" id="MF_03132"/>
    </source>
</evidence>
<evidence type="ECO:0000305" key="2"/>
<feature type="chain" id="PRO_0000402110" description="Eukaryotic translation initiation factor 6">
    <location>
        <begin position="1"/>
        <end position="246"/>
    </location>
</feature>
<feature type="modified residue" description="Phosphoserine; by CK1" evidence="1">
    <location>
        <position position="174"/>
    </location>
</feature>
<feature type="modified residue" description="Phosphoserine; by CK1" evidence="1">
    <location>
        <position position="175"/>
    </location>
</feature>
<accession>D1ZG64</accession>
<accession>F7VSC9</accession>